<proteinExistence type="evidence at protein level"/>
<organism>
    <name type="scientific">Mus musculus</name>
    <name type="common">Mouse</name>
    <dbReference type="NCBI Taxonomy" id="10090"/>
    <lineage>
        <taxon>Eukaryota</taxon>
        <taxon>Metazoa</taxon>
        <taxon>Chordata</taxon>
        <taxon>Craniata</taxon>
        <taxon>Vertebrata</taxon>
        <taxon>Euteleostomi</taxon>
        <taxon>Mammalia</taxon>
        <taxon>Eutheria</taxon>
        <taxon>Euarchontoglires</taxon>
        <taxon>Glires</taxon>
        <taxon>Rodentia</taxon>
        <taxon>Myomorpha</taxon>
        <taxon>Muroidea</taxon>
        <taxon>Muridae</taxon>
        <taxon>Murinae</taxon>
        <taxon>Mus</taxon>
        <taxon>Mus</taxon>
    </lineage>
</organism>
<gene>
    <name type="primary">Baiap2</name>
</gene>
<sequence>MSLSRSEEMHRLTENVYKTIMEQFNPSLRNFIAMGKNYEKALAGVTFAAKGYFDALVKMGELASESQGSKELGDVLFQMAEVHRQIQNQLEETLKSFHNELLTQLEQKVELDSRYLSAALKKYQTEQRSKGDALDKCQAELKKLRKKSQGSKNPQKYSDKELQYIDAISNKQGELENYVSDGYKTALTEERRRFCFLVEKQCAVAKNSAAYHSKGKELLAQKLPLWQQACADPNKIPDRAVQLMQQMANSNGSILPSALSASKSNLVISDPIPGAKPLPVPPELAPFVGRMSAQENVPVMNGVAGPDSEDYNPWADRKAAQPKSLSPPQSQSKLSDSYSNTLPVRKSVTPKNSYATTENKTLPRSSSMAAGLERNGRMRVKAIFSHAAGDNSTLLSFKEGDLITLLVPEARDGWHYGESEKTKMRGWFPFSYTRVLDSDGSDRLHMSLQQGKSSSTGNLLDKDDLALPPPDYGTSSRAFPTQTAGTFKQRPYSVAVPAFSQGLDDYGARSVSRNPFANVHLKPTVTNDRSAPLLS</sequence>
<dbReference type="EMBL" id="AF390178">
    <property type="protein sequence ID" value="AAK68153.1"/>
    <property type="molecule type" value="mRNA"/>
</dbReference>
<dbReference type="EMBL" id="AF390179">
    <property type="protein sequence ID" value="AAK81838.1"/>
    <property type="molecule type" value="mRNA"/>
</dbReference>
<dbReference type="EMBL" id="AB105196">
    <property type="protein sequence ID" value="BAC65241.1"/>
    <property type="molecule type" value="Genomic_DNA"/>
</dbReference>
<dbReference type="EMBL" id="AB105196">
    <property type="protein sequence ID" value="BAC65242.1"/>
    <property type="molecule type" value="Genomic_DNA"/>
</dbReference>
<dbReference type="EMBL" id="AK049469">
    <property type="protein sequence ID" value="BAC33764.1"/>
    <property type="molecule type" value="mRNA"/>
</dbReference>
<dbReference type="EMBL" id="BC006620">
    <property type="protein sequence ID" value="AAH06620.1"/>
    <property type="molecule type" value="mRNA"/>
</dbReference>
<dbReference type="EMBL" id="BC016411">
    <property type="protein sequence ID" value="AAH16411.1"/>
    <property type="molecule type" value="mRNA"/>
</dbReference>
<dbReference type="CCDS" id="CCDS25722.1">
    <molecule id="Q8BKX1-1"/>
</dbReference>
<dbReference type="CCDS" id="CCDS25723.1">
    <molecule id="Q8BKX1-4"/>
</dbReference>
<dbReference type="CCDS" id="CCDS25724.1">
    <molecule id="Q8BKX1-2"/>
</dbReference>
<dbReference type="RefSeq" id="NP_001032843.1">
    <molecule id="Q8BKX1-4"/>
    <property type="nucleotide sequence ID" value="NM_001037754.3"/>
</dbReference>
<dbReference type="RefSeq" id="NP_001032844.2">
    <molecule id="Q8BKX1-1"/>
    <property type="nucleotide sequence ID" value="NM_001037755.3"/>
</dbReference>
<dbReference type="RefSeq" id="NP_570932.2">
    <molecule id="Q8BKX1-2"/>
    <property type="nucleotide sequence ID" value="NM_130862.4"/>
</dbReference>
<dbReference type="SMR" id="Q8BKX1"/>
<dbReference type="BioGRID" id="223833">
    <property type="interactions" value="25"/>
</dbReference>
<dbReference type="DIP" id="DIP-32392N"/>
<dbReference type="FunCoup" id="Q8BKX1">
    <property type="interactions" value="399"/>
</dbReference>
<dbReference type="IntAct" id="Q8BKX1">
    <property type="interactions" value="13"/>
</dbReference>
<dbReference type="MINT" id="Q8BKX1"/>
<dbReference type="STRING" id="10090.ENSMUSP00000026436"/>
<dbReference type="GlyGen" id="Q8BKX1">
    <property type="glycosylation" value="3 sites, 1 N-linked glycan (1 site), 1 O-linked glycan (2 sites)"/>
</dbReference>
<dbReference type="iPTMnet" id="Q8BKX1"/>
<dbReference type="PhosphoSitePlus" id="Q8BKX1"/>
<dbReference type="SwissPalm" id="Q8BKX1"/>
<dbReference type="jPOST" id="Q8BKX1"/>
<dbReference type="PaxDb" id="10090-ENSMUSP00000026436"/>
<dbReference type="PeptideAtlas" id="Q8BKX1"/>
<dbReference type="ProteomicsDB" id="277157">
    <molecule id="Q8BKX1-1"/>
</dbReference>
<dbReference type="ProteomicsDB" id="277158">
    <molecule id="Q8BKX1-2"/>
</dbReference>
<dbReference type="ProteomicsDB" id="277159">
    <molecule id="Q8BKX1-3"/>
</dbReference>
<dbReference type="ProteomicsDB" id="277160">
    <molecule id="Q8BKX1-4"/>
</dbReference>
<dbReference type="Pumba" id="Q8BKX1"/>
<dbReference type="ABCD" id="Q8BKX1">
    <property type="antibodies" value="1 sequenced antibody"/>
</dbReference>
<dbReference type="Antibodypedia" id="19790">
    <property type="antibodies" value="549 antibodies from 38 providers"/>
</dbReference>
<dbReference type="DNASU" id="108100"/>
<dbReference type="Ensembl" id="ENSMUST00000026436.10">
    <molecule id="Q8BKX1-1"/>
    <property type="protein sequence ID" value="ENSMUSP00000026436.4"/>
    <property type="gene ID" value="ENSMUSG00000025372.17"/>
</dbReference>
<dbReference type="Ensembl" id="ENSMUST00000075180.12">
    <molecule id="Q8BKX1-2"/>
    <property type="protein sequence ID" value="ENSMUSP00000074674.6"/>
    <property type="gene ID" value="ENSMUSG00000025372.17"/>
</dbReference>
<dbReference type="Ensembl" id="ENSMUST00000103021.10">
    <molecule id="Q8BKX1-4"/>
    <property type="protein sequence ID" value="ENSMUSP00000099310.4"/>
    <property type="gene ID" value="ENSMUSG00000025372.17"/>
</dbReference>
<dbReference type="Ensembl" id="ENSMUST00000106231.8">
    <molecule id="Q8BKX1-3"/>
    <property type="protein sequence ID" value="ENSMUSP00000101838.2"/>
    <property type="gene ID" value="ENSMUSG00000025372.17"/>
</dbReference>
<dbReference type="GeneID" id="108100"/>
<dbReference type="KEGG" id="mmu:108100"/>
<dbReference type="UCSC" id="uc007mrh.1">
    <molecule id="Q8BKX1-4"/>
    <property type="organism name" value="mouse"/>
</dbReference>
<dbReference type="UCSC" id="uc007mri.1">
    <molecule id="Q8BKX1-1"/>
    <property type="organism name" value="mouse"/>
</dbReference>
<dbReference type="AGR" id="MGI:2137336"/>
<dbReference type="CTD" id="10458"/>
<dbReference type="MGI" id="MGI:2137336">
    <property type="gene designation" value="Baiap2"/>
</dbReference>
<dbReference type="VEuPathDB" id="HostDB:ENSMUSG00000025372"/>
<dbReference type="eggNOG" id="ENOG502QUM6">
    <property type="taxonomic scope" value="Eukaryota"/>
</dbReference>
<dbReference type="GeneTree" id="ENSGT00940000153560"/>
<dbReference type="HOGENOM" id="CLU_025877_0_1_1"/>
<dbReference type="InParanoid" id="Q8BKX1"/>
<dbReference type="OMA" id="FSHQAKG"/>
<dbReference type="OrthoDB" id="3800937at2759"/>
<dbReference type="PhylomeDB" id="Q8BKX1"/>
<dbReference type="TreeFam" id="TF325648"/>
<dbReference type="Reactome" id="R-MMU-2029482">
    <property type="pathway name" value="Regulation of actin dynamics for phagocytic cup formation"/>
</dbReference>
<dbReference type="Reactome" id="R-MMU-4420097">
    <property type="pathway name" value="VEGFA-VEGFR2 Pathway"/>
</dbReference>
<dbReference type="Reactome" id="R-MMU-5663213">
    <property type="pathway name" value="RHO GTPases Activate WASPs and WAVEs"/>
</dbReference>
<dbReference type="Reactome" id="R-MMU-9013149">
    <property type="pathway name" value="RAC1 GTPase cycle"/>
</dbReference>
<dbReference type="Reactome" id="R-MMU-9013423">
    <property type="pathway name" value="RAC3 GTPase cycle"/>
</dbReference>
<dbReference type="BioGRID-ORCS" id="108100">
    <property type="hits" value="2 hits in 77 CRISPR screens"/>
</dbReference>
<dbReference type="CD-CODE" id="CE726F99">
    <property type="entry name" value="Postsynaptic density"/>
</dbReference>
<dbReference type="ChiTaRS" id="Baiap2">
    <property type="organism name" value="mouse"/>
</dbReference>
<dbReference type="PRO" id="PR:Q8BKX1"/>
<dbReference type="Proteomes" id="UP000000589">
    <property type="component" value="Chromosome 11"/>
</dbReference>
<dbReference type="RNAct" id="Q8BKX1">
    <property type="molecule type" value="protein"/>
</dbReference>
<dbReference type="Bgee" id="ENSMUSG00000025372">
    <property type="expression patterns" value="Expressed in superior frontal gyrus and 187 other cell types or tissues"/>
</dbReference>
<dbReference type="ExpressionAtlas" id="Q8BKX1">
    <property type="expression patterns" value="baseline and differential"/>
</dbReference>
<dbReference type="GO" id="GO:0015629">
    <property type="term" value="C:actin cytoskeleton"/>
    <property type="evidence" value="ECO:0007669"/>
    <property type="project" value="Ensembl"/>
</dbReference>
<dbReference type="GO" id="GO:0005829">
    <property type="term" value="C:cytosol"/>
    <property type="evidence" value="ECO:0000250"/>
    <property type="project" value="UniProtKB"/>
</dbReference>
<dbReference type="GO" id="GO:0043198">
    <property type="term" value="C:dendritic shaft"/>
    <property type="evidence" value="ECO:0007669"/>
    <property type="project" value="Ensembl"/>
</dbReference>
<dbReference type="GO" id="GO:0061846">
    <property type="term" value="C:dendritic spine cytoplasm"/>
    <property type="evidence" value="ECO:0007669"/>
    <property type="project" value="Ensembl"/>
</dbReference>
<dbReference type="GO" id="GO:0060076">
    <property type="term" value="C:excitatory synapse"/>
    <property type="evidence" value="ECO:0007669"/>
    <property type="project" value="Ensembl"/>
</dbReference>
<dbReference type="GO" id="GO:0030175">
    <property type="term" value="C:filopodium"/>
    <property type="evidence" value="ECO:0007669"/>
    <property type="project" value="UniProtKB-SubCell"/>
</dbReference>
<dbReference type="GO" id="GO:0098978">
    <property type="term" value="C:glutamatergic synapse"/>
    <property type="evidence" value="ECO:0007669"/>
    <property type="project" value="Ensembl"/>
</dbReference>
<dbReference type="GO" id="GO:0030027">
    <property type="term" value="C:lamellipodium"/>
    <property type="evidence" value="ECO:0007669"/>
    <property type="project" value="Ensembl"/>
</dbReference>
<dbReference type="GO" id="GO:0005874">
    <property type="term" value="C:microtubule"/>
    <property type="evidence" value="ECO:0007669"/>
    <property type="project" value="Ensembl"/>
</dbReference>
<dbReference type="GO" id="GO:0043005">
    <property type="term" value="C:neuron projection"/>
    <property type="evidence" value="ECO:0000314"/>
    <property type="project" value="BHF-UCL"/>
</dbReference>
<dbReference type="GO" id="GO:0061845">
    <property type="term" value="C:neuron projection branch point"/>
    <property type="evidence" value="ECO:0007669"/>
    <property type="project" value="Ensembl"/>
</dbReference>
<dbReference type="GO" id="GO:0044306">
    <property type="term" value="C:neuron projection terminus"/>
    <property type="evidence" value="ECO:0007669"/>
    <property type="project" value="Ensembl"/>
</dbReference>
<dbReference type="GO" id="GO:0043025">
    <property type="term" value="C:neuronal cell body"/>
    <property type="evidence" value="ECO:0007669"/>
    <property type="project" value="Ensembl"/>
</dbReference>
<dbReference type="GO" id="GO:0099524">
    <property type="term" value="C:postsynaptic cytosol"/>
    <property type="evidence" value="ECO:0007669"/>
    <property type="project" value="Ensembl"/>
</dbReference>
<dbReference type="GO" id="GO:0099092">
    <property type="term" value="C:postsynaptic density, intracellular component"/>
    <property type="evidence" value="ECO:0007669"/>
    <property type="project" value="Ensembl"/>
</dbReference>
<dbReference type="GO" id="GO:0099523">
    <property type="term" value="C:presynaptic cytosol"/>
    <property type="evidence" value="ECO:0007669"/>
    <property type="project" value="Ensembl"/>
</dbReference>
<dbReference type="GO" id="GO:0001726">
    <property type="term" value="C:ruffle"/>
    <property type="evidence" value="ECO:0007669"/>
    <property type="project" value="UniProtKB-SubCell"/>
</dbReference>
<dbReference type="GO" id="GO:0098685">
    <property type="term" value="C:Schaffer collateral - CA1 synapse"/>
    <property type="evidence" value="ECO:0000314"/>
    <property type="project" value="SynGO"/>
</dbReference>
<dbReference type="GO" id="GO:0030141">
    <property type="term" value="C:secretory granule"/>
    <property type="evidence" value="ECO:0007669"/>
    <property type="project" value="Ensembl"/>
</dbReference>
<dbReference type="GO" id="GO:0097060">
    <property type="term" value="C:synaptic membrane"/>
    <property type="evidence" value="ECO:0007669"/>
    <property type="project" value="Ensembl"/>
</dbReference>
<dbReference type="GO" id="GO:0008093">
    <property type="term" value="F:cytoskeletal anchor activity"/>
    <property type="evidence" value="ECO:0007669"/>
    <property type="project" value="InterPro"/>
</dbReference>
<dbReference type="GO" id="GO:0042802">
    <property type="term" value="F:identical protein binding"/>
    <property type="evidence" value="ECO:0007669"/>
    <property type="project" value="Ensembl"/>
</dbReference>
<dbReference type="GO" id="GO:0030165">
    <property type="term" value="F:PDZ domain binding"/>
    <property type="evidence" value="ECO:0007669"/>
    <property type="project" value="Ensembl"/>
</dbReference>
<dbReference type="GO" id="GO:0070064">
    <property type="term" value="F:proline-rich region binding"/>
    <property type="evidence" value="ECO:0000250"/>
    <property type="project" value="UniProtKB"/>
</dbReference>
<dbReference type="GO" id="GO:0097110">
    <property type="term" value="F:scaffold protein binding"/>
    <property type="evidence" value="ECO:0007669"/>
    <property type="project" value="Ensembl"/>
</dbReference>
<dbReference type="GO" id="GO:0001221">
    <property type="term" value="F:transcription coregulator binding"/>
    <property type="evidence" value="ECO:0007669"/>
    <property type="project" value="Ensembl"/>
</dbReference>
<dbReference type="GO" id="GO:0051764">
    <property type="term" value="P:actin crosslink formation"/>
    <property type="evidence" value="ECO:0000315"/>
    <property type="project" value="UniProtKB"/>
</dbReference>
<dbReference type="GO" id="GO:0051017">
    <property type="term" value="P:actin filament bundle assembly"/>
    <property type="evidence" value="ECO:0000315"/>
    <property type="project" value="UniProtKB"/>
</dbReference>
<dbReference type="GO" id="GO:0071364">
    <property type="term" value="P:cellular response to epidermal growth factor stimulus"/>
    <property type="evidence" value="ECO:0007669"/>
    <property type="project" value="Ensembl"/>
</dbReference>
<dbReference type="GO" id="GO:1905232">
    <property type="term" value="P:cellular response to L-glutamate"/>
    <property type="evidence" value="ECO:0007669"/>
    <property type="project" value="Ensembl"/>
</dbReference>
<dbReference type="GO" id="GO:0016358">
    <property type="term" value="P:dendrite development"/>
    <property type="evidence" value="ECO:0000315"/>
    <property type="project" value="MGI"/>
</dbReference>
<dbReference type="GO" id="GO:0050804">
    <property type="term" value="P:modulation of chemical synaptic transmission"/>
    <property type="evidence" value="ECO:0000314"/>
    <property type="project" value="SynGO"/>
</dbReference>
<dbReference type="GO" id="GO:0007009">
    <property type="term" value="P:plasma membrane organization"/>
    <property type="evidence" value="ECO:0007669"/>
    <property type="project" value="InterPro"/>
</dbReference>
<dbReference type="GO" id="GO:0061003">
    <property type="term" value="P:positive regulation of dendritic spine morphogenesis"/>
    <property type="evidence" value="ECO:0007669"/>
    <property type="project" value="Ensembl"/>
</dbReference>
<dbReference type="GO" id="GO:2000463">
    <property type="term" value="P:positive regulation of excitatory postsynaptic potential"/>
    <property type="evidence" value="ECO:0007669"/>
    <property type="project" value="Ensembl"/>
</dbReference>
<dbReference type="GO" id="GO:0035418">
    <property type="term" value="P:protein localization to synapse"/>
    <property type="evidence" value="ECO:0007669"/>
    <property type="project" value="Ensembl"/>
</dbReference>
<dbReference type="GO" id="GO:0032956">
    <property type="term" value="P:regulation of actin cytoskeleton organization"/>
    <property type="evidence" value="ECO:0000250"/>
    <property type="project" value="UniProtKB"/>
</dbReference>
<dbReference type="GO" id="GO:0008360">
    <property type="term" value="P:regulation of cell shape"/>
    <property type="evidence" value="ECO:0000315"/>
    <property type="project" value="UniProtKB"/>
</dbReference>
<dbReference type="GO" id="GO:1905274">
    <property type="term" value="P:regulation of modification of postsynaptic actin cytoskeleton"/>
    <property type="evidence" value="ECO:0007669"/>
    <property type="project" value="Ensembl"/>
</dbReference>
<dbReference type="GO" id="GO:0048167">
    <property type="term" value="P:regulation of synaptic plasticity"/>
    <property type="evidence" value="ECO:0000315"/>
    <property type="project" value="MGI"/>
</dbReference>
<dbReference type="GO" id="GO:0007266">
    <property type="term" value="P:Rho protein signal transduction"/>
    <property type="evidence" value="ECO:0000304"/>
    <property type="project" value="MGI"/>
</dbReference>
<dbReference type="CDD" id="cd07646">
    <property type="entry name" value="I-BAR_IMD_IRSp53"/>
    <property type="match status" value="1"/>
</dbReference>
<dbReference type="CDD" id="cd11915">
    <property type="entry name" value="SH3_Irsp53"/>
    <property type="match status" value="1"/>
</dbReference>
<dbReference type="FunFam" id="1.20.1270.60:FF:000011">
    <property type="entry name" value="Brain-specific angiogenesis inhibitor 1-associated protein 2"/>
    <property type="match status" value="1"/>
</dbReference>
<dbReference type="FunFam" id="2.30.30.40:FF:000018">
    <property type="entry name" value="Brain-specific angiogenesis inhibitor 1-associated protein 2"/>
    <property type="match status" value="1"/>
</dbReference>
<dbReference type="Gene3D" id="1.20.1270.60">
    <property type="entry name" value="Arfaptin homology (AH) domain/BAR domain"/>
    <property type="match status" value="1"/>
</dbReference>
<dbReference type="Gene3D" id="2.30.30.40">
    <property type="entry name" value="SH3 Domains"/>
    <property type="match status" value="1"/>
</dbReference>
<dbReference type="InterPro" id="IPR027267">
    <property type="entry name" value="AH/BAR_dom_sf"/>
</dbReference>
<dbReference type="InterPro" id="IPR030128">
    <property type="entry name" value="BAIP2_I-BAR_dom"/>
</dbReference>
<dbReference type="InterPro" id="IPR035594">
    <property type="entry name" value="BAIP2_SH3"/>
</dbReference>
<dbReference type="InterPro" id="IPR013606">
    <property type="entry name" value="I-BAR_dom"/>
</dbReference>
<dbReference type="InterPro" id="IPR027681">
    <property type="entry name" value="IRSp53/IRTKS/Pinkbar"/>
</dbReference>
<dbReference type="InterPro" id="IPR036028">
    <property type="entry name" value="SH3-like_dom_sf"/>
</dbReference>
<dbReference type="InterPro" id="IPR001452">
    <property type="entry name" value="SH3_domain"/>
</dbReference>
<dbReference type="PANTHER" id="PTHR14206">
    <property type="entry name" value="BRAIN-SPECIFIC ANGIOGENESIS INHIBITOR 1-ASSOCIATED PROTEIN 2"/>
    <property type="match status" value="1"/>
</dbReference>
<dbReference type="PANTHER" id="PTHR14206:SF3">
    <property type="entry name" value="BRAIN-SPECIFIC ANGIOGENESIS INHIBITOR 1-ASSOCIATED PROTEIN 2"/>
    <property type="match status" value="1"/>
</dbReference>
<dbReference type="Pfam" id="PF08397">
    <property type="entry name" value="IMD"/>
    <property type="match status" value="1"/>
</dbReference>
<dbReference type="Pfam" id="PF07653">
    <property type="entry name" value="SH3_2"/>
    <property type="match status" value="1"/>
</dbReference>
<dbReference type="SMART" id="SM00326">
    <property type="entry name" value="SH3"/>
    <property type="match status" value="1"/>
</dbReference>
<dbReference type="SUPFAM" id="SSF103657">
    <property type="entry name" value="BAR/IMD domain-like"/>
    <property type="match status" value="1"/>
</dbReference>
<dbReference type="SUPFAM" id="SSF50044">
    <property type="entry name" value="SH3-domain"/>
    <property type="match status" value="1"/>
</dbReference>
<dbReference type="PROSITE" id="PS51338">
    <property type="entry name" value="IMD"/>
    <property type="match status" value="1"/>
</dbReference>
<dbReference type="PROSITE" id="PS50002">
    <property type="entry name" value="SH3"/>
    <property type="match status" value="1"/>
</dbReference>
<evidence type="ECO:0000250" key="1"/>
<evidence type="ECO:0000250" key="2">
    <source>
        <dbReference type="UniProtKB" id="Q9UQB8"/>
    </source>
</evidence>
<evidence type="ECO:0000255" key="3"/>
<evidence type="ECO:0000255" key="4">
    <source>
        <dbReference type="PROSITE-ProRule" id="PRU00192"/>
    </source>
</evidence>
<evidence type="ECO:0000255" key="5">
    <source>
        <dbReference type="PROSITE-ProRule" id="PRU00668"/>
    </source>
</evidence>
<evidence type="ECO:0000256" key="6">
    <source>
        <dbReference type="SAM" id="MobiDB-lite"/>
    </source>
</evidence>
<evidence type="ECO:0000269" key="7">
    <source>
    </source>
</evidence>
<evidence type="ECO:0000269" key="8">
    <source>
    </source>
</evidence>
<evidence type="ECO:0000269" key="9">
    <source>
    </source>
</evidence>
<evidence type="ECO:0000303" key="10">
    <source>
    </source>
</evidence>
<evidence type="ECO:0000303" key="11">
    <source>
    </source>
</evidence>
<evidence type="ECO:0000305" key="12"/>
<evidence type="ECO:0007744" key="13">
    <source>
    </source>
</evidence>
<name>BAIP2_MOUSE</name>
<feature type="chain" id="PRO_0000064817" description="BAR/IMD domain-containing adapter protein 2">
    <location>
        <begin position="1"/>
        <end position="535"/>
    </location>
</feature>
<feature type="domain" description="IMD" evidence="5">
    <location>
        <begin position="1"/>
        <end position="250"/>
    </location>
</feature>
<feature type="domain" description="SH3" evidence="4">
    <location>
        <begin position="375"/>
        <end position="438"/>
    </location>
</feature>
<feature type="region of interest" description="Disordered" evidence="6">
    <location>
        <begin position="299"/>
        <end position="370"/>
    </location>
</feature>
<feature type="region of interest" description="Disordered" evidence="6">
    <location>
        <begin position="445"/>
        <end position="477"/>
    </location>
</feature>
<feature type="coiled-coil region" evidence="3">
    <location>
        <begin position="88"/>
        <end position="153"/>
    </location>
</feature>
<feature type="compositionally biased region" description="Low complexity" evidence="6">
    <location>
        <begin position="321"/>
        <end position="335"/>
    </location>
</feature>
<feature type="compositionally biased region" description="Polar residues" evidence="6">
    <location>
        <begin position="349"/>
        <end position="368"/>
    </location>
</feature>
<feature type="compositionally biased region" description="Polar residues" evidence="6">
    <location>
        <begin position="447"/>
        <end position="458"/>
    </location>
</feature>
<feature type="modified residue" description="Phosphoserine" evidence="2">
    <location>
        <position position="262"/>
    </location>
</feature>
<feature type="modified residue" description="Phosphoserine" evidence="2">
    <location>
        <position position="324"/>
    </location>
</feature>
<feature type="modified residue" description="Phosphoserine" evidence="2">
    <location>
        <position position="326"/>
    </location>
</feature>
<feature type="modified residue" description="Phosphoserine" evidence="2">
    <location>
        <position position="337"/>
    </location>
</feature>
<feature type="modified residue" description="Phosphothreonine" evidence="2">
    <location>
        <position position="341"/>
    </location>
</feature>
<feature type="modified residue" description="Phosphoserine" evidence="2">
    <location>
        <position position="347"/>
    </location>
</feature>
<feature type="modified residue" description="Phosphothreonine" evidence="2">
    <location>
        <position position="361"/>
    </location>
</feature>
<feature type="modified residue" description="Phosphoserine" evidence="2">
    <location>
        <position position="367"/>
    </location>
</feature>
<feature type="modified residue" description="Phosphoserine" evidence="2">
    <location>
        <position position="385"/>
    </location>
</feature>
<feature type="modified residue" description="Phosphoserine" evidence="13">
    <location>
        <position position="396"/>
    </location>
</feature>
<feature type="modified residue" description="Phosphoserine" evidence="2">
    <location>
        <position position="455"/>
    </location>
</feature>
<feature type="splice variant" id="VSP_015507" description="In isoform 4." evidence="10">
    <location>
        <begin position="290"/>
        <end position="329"/>
    </location>
</feature>
<feature type="splice variant" id="VSP_015508" description="In isoform 2 and isoform 4." evidence="10">
    <original>RNPFANVHLKPTVTNDRSAPLLS</original>
    <variation>SGSGTLVSTV</variation>
    <location>
        <begin position="513"/>
        <end position="535"/>
    </location>
</feature>
<feature type="splice variant" id="VSP_015509" description="In isoform 3." evidence="11">
    <location>
        <begin position="514"/>
        <end position="535"/>
    </location>
</feature>
<feature type="sequence conflict" description="In Ref. 3; BAC33764." evidence="12" ref="3">
    <original>QN</original>
    <variation>HI</variation>
    <location>
        <begin position="87"/>
        <end position="88"/>
    </location>
</feature>
<feature type="sequence conflict" description="In Ref. 3; BAC33764." evidence="12" ref="3">
    <original>S</original>
    <variation>F</variation>
    <location>
        <position position="326"/>
    </location>
</feature>
<feature type="sequence conflict" description="In Ref. 3; BAC33764." evidence="12" ref="3">
    <original>S</original>
    <variation>F</variation>
    <location>
        <position position="330"/>
    </location>
</feature>
<accession>Q8BKX1</accession>
<accession>Q91V97</accession>
<accession>Q923V9</accession>
<accession>Q923W0</accession>
<comment type="function">
    <text evidence="9">Adapter protein that links membrane-bound small G-proteins to cytoplasmic effector proteins. Necessary for CDC42-mediated reorganization of the actin cytoskeleton and for RAC1-mediated membrane ruffling. Involved in the regulation of the actin cytoskeleton by WASF family members and the Arp2/3 complex. Plays a role in neurite growth. Acts syngeristically with ENAH to promote filipodia formation. Plays a role in the reorganization of the actin cytoskeleton in response to bacterial infection. Participates in actin bundling when associated with EPS8, promoting filopodial protrusions.</text>
</comment>
<comment type="subunit">
    <text evidence="1 7 9">Homodimer. Interacts with CDC42 and RAC1 that have been activated by GTP binding. Binds DIAPH1. Interacts with ATN1, ADGRB1, SHANK1, SHANK2, SHANK3, TIAM1, WASF1 and WASF2. Interacts with ENAH after recruitment of CDC42 (By similarity). Interacts with EPS8.</text>
</comment>
<comment type="interaction">
    <interactant intactId="EBI-771498">
        <id>Q8BKX1</id>
    </interactant>
    <interactant intactId="EBI-1026445">
        <id>O08808</id>
        <label>Diaph1</label>
    </interactant>
    <organismsDiffer>false</organismsDiffer>
    <experiments>3</experiments>
</comment>
<comment type="interaction">
    <interactant intactId="EBI-771498">
        <id>Q8BKX1</id>
    </interactant>
    <interactant intactId="EBI-300895">
        <id>Q62108</id>
        <label>Dlg4</label>
    </interactant>
    <organismsDiffer>false</organismsDiffer>
    <experiments>4</experiments>
</comment>
<comment type="interaction">
    <interactant intactId="EBI-771498">
        <id>Q8BKX1</id>
    </interactant>
    <interactant intactId="EBI-8526464">
        <id>A4GZ26</id>
        <label>Iqsec2</label>
    </interactant>
    <organismsDiffer>false</organismsDiffer>
    <experiments>7</experiments>
</comment>
<comment type="interaction">
    <interactant intactId="EBI-771498">
        <id>Q8BKX1</id>
    </interactant>
    <interactant intactId="EBI-771450">
        <id>Q4ACU6</id>
        <label>Shank3</label>
    </interactant>
    <organismsDiffer>false</organismsDiffer>
    <experiments>6</experiments>
</comment>
<comment type="subcellular location">
    <subcellularLocation>
        <location evidence="1">Cytoplasm</location>
    </subcellularLocation>
    <subcellularLocation>
        <location evidence="1">Membrane</location>
        <topology evidence="1">Peripheral membrane protein</topology>
    </subcellularLocation>
    <subcellularLocation>
        <location evidence="1">Cell projection</location>
        <location evidence="1">Filopodium</location>
    </subcellularLocation>
    <subcellularLocation>
        <location evidence="1">Cell projection</location>
        <location evidence="1">Ruffle</location>
    </subcellularLocation>
    <subcellularLocation>
        <location evidence="1">Cytoplasm</location>
        <location evidence="1">Cytoskeleton</location>
    </subcellularLocation>
    <text evidence="1">Detected throughout the cytoplasm in the absence of specific binding partners. Detected in filopodia and close to membrane ruffles. Recruited to actin pedestals that are formed upon infection by bacteria at bacterial attachment sites (By similarity).</text>
</comment>
<comment type="alternative products">
    <event type="alternative splicing"/>
    <isoform>
        <id>Q8BKX1-1</id>
        <name>1</name>
        <sequence type="displayed"/>
    </isoform>
    <isoform>
        <id>Q8BKX1-2</id>
        <name>2</name>
        <sequence type="described" ref="VSP_015508"/>
    </isoform>
    <isoform>
        <id>Q8BKX1-3</id>
        <name>3</name>
        <sequence type="described" ref="VSP_015509"/>
    </isoform>
    <isoform>
        <id>Q8BKX1-4</id>
        <name>4</name>
        <name>Short form</name>
        <sequence type="described" ref="VSP_015507 VSP_015508"/>
    </isoform>
</comment>
<comment type="tissue specificity">
    <text evidence="8">Detected in liver, brain, olfactory bulb, brain cortex, caudate putamen, hypothalamus and cerebellum.</text>
</comment>
<comment type="domain">
    <text evidence="1">The IMD domain forms a coiled coil. The isolated domain can induce actin bundling and filopodia formation. In the absence of G-proteins intramolecular interaction between the IMD and the SH3 domain gives rise to an auto-inhibited state of the protein. Interaction of the IMD with RAC1 or CDC42 leads to activation (By similarity).</text>
</comment>
<comment type="domain">
    <text evidence="1">The SH3 domain interacts with ATN1, ADGRB1, WASF1, WASF2, SHANK1, DIAPH1 and ENAH.</text>
</comment>
<comment type="PTM">
    <text evidence="1">Phosphorylated on tyrosine residues by INSR in response to insulin treatment.</text>
</comment>
<protein>
    <recommendedName>
        <fullName evidence="2">BAR/IMD domain-containing adapter protein 2</fullName>
    </recommendedName>
    <alternativeName>
        <fullName>Brain-specific angiogenesis inhibitor 1-associated protein 2</fullName>
        <shortName>BAI-associated protein 2</shortName>
        <shortName>BAI1-associated protein 2</shortName>
    </alternativeName>
    <alternativeName>
        <fullName>Insulin receptor substrate protein of 53 kDa</fullName>
        <shortName>IRSp53</shortName>
        <shortName>Insulin receptor substrate p53</shortName>
    </alternativeName>
    <alternativeName>
        <fullName>Insulin receptor tyrosine kinase 53 kDa substrate</fullName>
    </alternativeName>
</protein>
<keyword id="KW-0025">Alternative splicing</keyword>
<keyword id="KW-0966">Cell projection</keyword>
<keyword id="KW-0175">Coiled coil</keyword>
<keyword id="KW-0963">Cytoplasm</keyword>
<keyword id="KW-0206">Cytoskeleton</keyword>
<keyword id="KW-0472">Membrane</keyword>
<keyword id="KW-0597">Phosphoprotein</keyword>
<keyword id="KW-1185">Reference proteome</keyword>
<keyword id="KW-0728">SH3 domain</keyword>
<reference key="1">
    <citation type="journal article" date="2001" name="Neurosci. Lett.">
        <title>Insulin receptor substrate protein p53 localization in rats suggests mechanism for specific polyglutamine neurodegeneration.</title>
        <authorList>
            <person name="Thomas E.A."/>
            <person name="Foye P.E."/>
            <person name="Alvarez C.E."/>
            <person name="Usui H."/>
            <person name="Sutcliffe J.G."/>
        </authorList>
    </citation>
    <scope>NUCLEOTIDE SEQUENCE [MRNA] (ISOFORMS 2 AND 4)</scope>
    <source>
        <strain>C57BL/6J</strain>
        <tissue>Brain</tissue>
    </source>
</reference>
<reference key="2">
    <citation type="journal article" date="2003" name="J. Hum. Genet.">
        <title>Genomic structure and alternative splicing of the insulin receptor tyrosine kinase substrate of 53-kDa protein.</title>
        <authorList>
            <person name="Miyahara A."/>
            <person name="Okumura-Oho Y."/>
            <person name="Miyashita T."/>
            <person name="Hoshika A."/>
            <person name="Yamada M."/>
        </authorList>
    </citation>
    <scope>NUCLEOTIDE SEQUENCE [GENOMIC DNA] (ISOFORMS 2 AND 4)</scope>
</reference>
<reference key="3">
    <citation type="journal article" date="2005" name="Science">
        <title>The transcriptional landscape of the mammalian genome.</title>
        <authorList>
            <person name="Carninci P."/>
            <person name="Kasukawa T."/>
            <person name="Katayama S."/>
            <person name="Gough J."/>
            <person name="Frith M.C."/>
            <person name="Maeda N."/>
            <person name="Oyama R."/>
            <person name="Ravasi T."/>
            <person name="Lenhard B."/>
            <person name="Wells C."/>
            <person name="Kodzius R."/>
            <person name="Shimokawa K."/>
            <person name="Bajic V.B."/>
            <person name="Brenner S.E."/>
            <person name="Batalov S."/>
            <person name="Forrest A.R."/>
            <person name="Zavolan M."/>
            <person name="Davis M.J."/>
            <person name="Wilming L.G."/>
            <person name="Aidinis V."/>
            <person name="Allen J.E."/>
            <person name="Ambesi-Impiombato A."/>
            <person name="Apweiler R."/>
            <person name="Aturaliya R.N."/>
            <person name="Bailey T.L."/>
            <person name="Bansal M."/>
            <person name="Baxter L."/>
            <person name="Beisel K.W."/>
            <person name="Bersano T."/>
            <person name="Bono H."/>
            <person name="Chalk A.M."/>
            <person name="Chiu K.P."/>
            <person name="Choudhary V."/>
            <person name="Christoffels A."/>
            <person name="Clutterbuck D.R."/>
            <person name="Crowe M.L."/>
            <person name="Dalla E."/>
            <person name="Dalrymple B.P."/>
            <person name="de Bono B."/>
            <person name="Della Gatta G."/>
            <person name="di Bernardo D."/>
            <person name="Down T."/>
            <person name="Engstrom P."/>
            <person name="Fagiolini M."/>
            <person name="Faulkner G."/>
            <person name="Fletcher C.F."/>
            <person name="Fukushima T."/>
            <person name="Furuno M."/>
            <person name="Futaki S."/>
            <person name="Gariboldi M."/>
            <person name="Georgii-Hemming P."/>
            <person name="Gingeras T.R."/>
            <person name="Gojobori T."/>
            <person name="Green R.E."/>
            <person name="Gustincich S."/>
            <person name="Harbers M."/>
            <person name="Hayashi Y."/>
            <person name="Hensch T.K."/>
            <person name="Hirokawa N."/>
            <person name="Hill D."/>
            <person name="Huminiecki L."/>
            <person name="Iacono M."/>
            <person name="Ikeo K."/>
            <person name="Iwama A."/>
            <person name="Ishikawa T."/>
            <person name="Jakt M."/>
            <person name="Kanapin A."/>
            <person name="Katoh M."/>
            <person name="Kawasawa Y."/>
            <person name="Kelso J."/>
            <person name="Kitamura H."/>
            <person name="Kitano H."/>
            <person name="Kollias G."/>
            <person name="Krishnan S.P."/>
            <person name="Kruger A."/>
            <person name="Kummerfeld S.K."/>
            <person name="Kurochkin I.V."/>
            <person name="Lareau L.F."/>
            <person name="Lazarevic D."/>
            <person name="Lipovich L."/>
            <person name="Liu J."/>
            <person name="Liuni S."/>
            <person name="McWilliam S."/>
            <person name="Madan Babu M."/>
            <person name="Madera M."/>
            <person name="Marchionni L."/>
            <person name="Matsuda H."/>
            <person name="Matsuzawa S."/>
            <person name="Miki H."/>
            <person name="Mignone F."/>
            <person name="Miyake S."/>
            <person name="Morris K."/>
            <person name="Mottagui-Tabar S."/>
            <person name="Mulder N."/>
            <person name="Nakano N."/>
            <person name="Nakauchi H."/>
            <person name="Ng P."/>
            <person name="Nilsson R."/>
            <person name="Nishiguchi S."/>
            <person name="Nishikawa S."/>
            <person name="Nori F."/>
            <person name="Ohara O."/>
            <person name="Okazaki Y."/>
            <person name="Orlando V."/>
            <person name="Pang K.C."/>
            <person name="Pavan W.J."/>
            <person name="Pavesi G."/>
            <person name="Pesole G."/>
            <person name="Petrovsky N."/>
            <person name="Piazza S."/>
            <person name="Reed J."/>
            <person name="Reid J.F."/>
            <person name="Ring B.Z."/>
            <person name="Ringwald M."/>
            <person name="Rost B."/>
            <person name="Ruan Y."/>
            <person name="Salzberg S.L."/>
            <person name="Sandelin A."/>
            <person name="Schneider C."/>
            <person name="Schoenbach C."/>
            <person name="Sekiguchi K."/>
            <person name="Semple C.A."/>
            <person name="Seno S."/>
            <person name="Sessa L."/>
            <person name="Sheng Y."/>
            <person name="Shibata Y."/>
            <person name="Shimada H."/>
            <person name="Shimada K."/>
            <person name="Silva D."/>
            <person name="Sinclair B."/>
            <person name="Sperling S."/>
            <person name="Stupka E."/>
            <person name="Sugiura K."/>
            <person name="Sultana R."/>
            <person name="Takenaka Y."/>
            <person name="Taki K."/>
            <person name="Tammoja K."/>
            <person name="Tan S.L."/>
            <person name="Tang S."/>
            <person name="Taylor M.S."/>
            <person name="Tegner J."/>
            <person name="Teichmann S.A."/>
            <person name="Ueda H.R."/>
            <person name="van Nimwegen E."/>
            <person name="Verardo R."/>
            <person name="Wei C.L."/>
            <person name="Yagi K."/>
            <person name="Yamanishi H."/>
            <person name="Zabarovsky E."/>
            <person name="Zhu S."/>
            <person name="Zimmer A."/>
            <person name="Hide W."/>
            <person name="Bult C."/>
            <person name="Grimmond S.M."/>
            <person name="Teasdale R.D."/>
            <person name="Liu E.T."/>
            <person name="Brusic V."/>
            <person name="Quackenbush J."/>
            <person name="Wahlestedt C."/>
            <person name="Mattick J.S."/>
            <person name="Hume D.A."/>
            <person name="Kai C."/>
            <person name="Sasaki D."/>
            <person name="Tomaru Y."/>
            <person name="Fukuda S."/>
            <person name="Kanamori-Katayama M."/>
            <person name="Suzuki M."/>
            <person name="Aoki J."/>
            <person name="Arakawa T."/>
            <person name="Iida J."/>
            <person name="Imamura K."/>
            <person name="Itoh M."/>
            <person name="Kato T."/>
            <person name="Kawaji H."/>
            <person name="Kawagashira N."/>
            <person name="Kawashima T."/>
            <person name="Kojima M."/>
            <person name="Kondo S."/>
            <person name="Konno H."/>
            <person name="Nakano K."/>
            <person name="Ninomiya N."/>
            <person name="Nishio T."/>
            <person name="Okada M."/>
            <person name="Plessy C."/>
            <person name="Shibata K."/>
            <person name="Shiraki T."/>
            <person name="Suzuki S."/>
            <person name="Tagami M."/>
            <person name="Waki K."/>
            <person name="Watahiki A."/>
            <person name="Okamura-Oho Y."/>
            <person name="Suzuki H."/>
            <person name="Kawai J."/>
            <person name="Hayashizaki Y."/>
        </authorList>
    </citation>
    <scope>NUCLEOTIDE SEQUENCE [LARGE SCALE MRNA] (ISOFORM 1)</scope>
    <source>
        <strain>C57BL/6J</strain>
        <tissue>Embryo</tissue>
    </source>
</reference>
<reference key="4">
    <citation type="journal article" date="2004" name="Genome Res.">
        <title>The status, quality, and expansion of the NIH full-length cDNA project: the Mammalian Gene Collection (MGC).</title>
        <authorList>
            <consortium name="The MGC Project Team"/>
        </authorList>
    </citation>
    <scope>NUCLEOTIDE SEQUENCE [LARGE SCALE MRNA] (ISOFORM 3)</scope>
    <source>
        <strain>FVB/N</strain>
        <tissue>Mammary gland</tissue>
    </source>
</reference>
<reference key="5">
    <citation type="journal article" date="2000" name="Biochem. Biophys. Res. Commun.">
        <title>Rho small G-protein-dependent binding of mDia to an Src homology 3 domain-containing IRSp53/BAIAP2.</title>
        <authorList>
            <person name="Fujiwara T."/>
            <person name="Mammoto A."/>
            <person name="Kim Y."/>
            <person name="Takai Y."/>
        </authorList>
    </citation>
    <scope>INTERACTION WITH DIAPH1</scope>
</reference>
<reference key="6">
    <citation type="journal article" date="2002" name="J. Biol. Chem.">
        <title>Novel isoform of insulin receptor substrate p53/p58 is generated by alternative splicing in the CRIB/SH3-binding region.</title>
        <authorList>
            <person name="Alvarez C.E."/>
            <person name="Sutcliffe J.G."/>
            <person name="Thomas E.A."/>
        </authorList>
    </citation>
    <scope>ALTERNATIVE SPLICING</scope>
    <scope>TISSUE SPECIFICITY</scope>
</reference>
<reference key="7">
    <citation type="journal article" date="2005" name="Nat. Biotechnol.">
        <title>Immunoaffinity profiling of tyrosine phosphorylation in cancer cells.</title>
        <authorList>
            <person name="Rush J."/>
            <person name="Moritz A."/>
            <person name="Lee K.A."/>
            <person name="Guo A."/>
            <person name="Goss V.L."/>
            <person name="Spek E.J."/>
            <person name="Zhang H."/>
            <person name="Zha X.-M."/>
            <person name="Polakiewicz R.D."/>
            <person name="Comb M.J."/>
        </authorList>
    </citation>
    <scope>IDENTIFICATION BY MASS SPECTROMETRY [LARGE SCALE ANALYSIS]</scope>
</reference>
<reference key="8">
    <citation type="journal article" date="2006" name="Mol. Cell. Proteomics">
        <title>Comprehensive identification of phosphorylation sites in postsynaptic density preparations.</title>
        <authorList>
            <person name="Trinidad J.C."/>
            <person name="Specht C.G."/>
            <person name="Thalhammer A."/>
            <person name="Schoepfer R."/>
            <person name="Burlingame A.L."/>
        </authorList>
    </citation>
    <scope>IDENTIFICATION BY MASS SPECTROMETRY [LARGE SCALE ANALYSIS]</scope>
    <source>
        <tissue>Brain</tissue>
    </source>
</reference>
<reference key="9">
    <citation type="journal article" date="2006" name="Nat. Cell Biol.">
        <title>Regulation of cell shape by Cdc42 is mediated by the synergic actin-bundling activity of the Eps8-IRSp53 complex.</title>
        <authorList>
            <person name="Disanza A."/>
            <person name="Mantoani S."/>
            <person name="Hertzog M."/>
            <person name="Gerboth S."/>
            <person name="Frittoli E."/>
            <person name="Steffen A."/>
            <person name="Berhoerster K."/>
            <person name="Kreienkamp H.J."/>
            <person name="Milanesi F."/>
            <person name="Di Fiore P.P."/>
            <person name="Ciliberto A."/>
            <person name="Stradal T.E."/>
            <person name="Scita G."/>
        </authorList>
    </citation>
    <scope>FUNCTION</scope>
    <scope>INTERACTION WITH EPS8</scope>
</reference>
<reference key="10">
    <citation type="journal article" date="2007" name="Proc. Natl. Acad. Sci. U.S.A.">
        <title>Large-scale phosphorylation analysis of mouse liver.</title>
        <authorList>
            <person name="Villen J."/>
            <person name="Beausoleil S.A."/>
            <person name="Gerber S.A."/>
            <person name="Gygi S.P."/>
        </authorList>
    </citation>
    <scope>IDENTIFICATION BY MASS SPECTROMETRY [LARGE SCALE ANALYSIS]</scope>
    <source>
        <tissue>Liver</tissue>
    </source>
</reference>
<reference key="11">
    <citation type="journal article" date="2010" name="Cell">
        <title>A tissue-specific atlas of mouse protein phosphorylation and expression.</title>
        <authorList>
            <person name="Huttlin E.L."/>
            <person name="Jedrychowski M.P."/>
            <person name="Elias J.E."/>
            <person name="Goswami T."/>
            <person name="Rad R."/>
            <person name="Beausoleil S.A."/>
            <person name="Villen J."/>
            <person name="Haas W."/>
            <person name="Sowa M.E."/>
            <person name="Gygi S.P."/>
        </authorList>
    </citation>
    <scope>PHOSPHORYLATION [LARGE SCALE ANALYSIS] AT SER-396</scope>
    <scope>IDENTIFICATION BY MASS SPECTROMETRY [LARGE SCALE ANALYSIS]</scope>
    <source>
        <tissue>Brain</tissue>
        <tissue>Kidney</tissue>
    </source>
</reference>